<protein>
    <recommendedName>
        <fullName>Uncharacterized protein HI_0939</fullName>
    </recommendedName>
</protein>
<sequence length="238" mass="26787">MMKVLLKGQTLLALMISLSLSSLLLLSISHFYVQIQTQNQHMLLHLKLQAELQRTLQLIGKDLRRLGFRALNAKLTESNLSLFELDEQGTAIFISQEDNAPPNSCVLFFYDLNKNGCIGKGSPKTCMKKGKNTSKSSTEELFGYKVSNKMIKTKLTYQSVIPTNCTAETCKRAFQQTACNAGGGWADLLDNNEYEITRLQFNWLIEGKGLEIKLKGNLKQTPNISYETSLVVVLWNQK</sequence>
<evidence type="ECO:0000255" key="1"/>
<evidence type="ECO:0000305" key="2"/>
<proteinExistence type="predicted"/>
<accession>P44080</accession>
<comment type="subcellular location">
    <subcellularLocation>
        <location evidence="2">Membrane</location>
        <topology evidence="2">Single-pass membrane protein</topology>
    </subcellularLocation>
</comment>
<name>Y939_HAEIN</name>
<dbReference type="EMBL" id="L42023">
    <property type="protein sequence ID" value="AAC22603.1"/>
    <property type="molecule type" value="Genomic_DNA"/>
</dbReference>
<dbReference type="PIR" id="H64016">
    <property type="entry name" value="H64016"/>
</dbReference>
<dbReference type="RefSeq" id="NP_439099.1">
    <property type="nucleotide sequence ID" value="NC_000907.1"/>
</dbReference>
<dbReference type="STRING" id="71421.HI_0939"/>
<dbReference type="EnsemblBacteria" id="AAC22603">
    <property type="protein sequence ID" value="AAC22603"/>
    <property type="gene ID" value="HI_0939"/>
</dbReference>
<dbReference type="KEGG" id="hin:HI_0939"/>
<dbReference type="PATRIC" id="fig|71421.8.peg.980"/>
<dbReference type="eggNOG" id="COG4795">
    <property type="taxonomic scope" value="Bacteria"/>
</dbReference>
<dbReference type="HOGENOM" id="CLU_101731_0_0_6"/>
<dbReference type="OrthoDB" id="5296662at2"/>
<dbReference type="BioCyc" id="HINF71421:G1GJ1-979-MONOMER"/>
<dbReference type="Proteomes" id="UP000000579">
    <property type="component" value="Chromosome"/>
</dbReference>
<dbReference type="GO" id="GO:0016020">
    <property type="term" value="C:membrane"/>
    <property type="evidence" value="ECO:0007669"/>
    <property type="project" value="UniProtKB-SubCell"/>
</dbReference>
<dbReference type="InterPro" id="IPR016419">
    <property type="entry name" value="Prepilin_Pept-dep_B_prd"/>
</dbReference>
<dbReference type="PIRSF" id="PIRSF004525">
    <property type="entry name" value="Pilin_peptidase-dep_B_prd"/>
    <property type="match status" value="1"/>
</dbReference>
<reference key="1">
    <citation type="journal article" date="1995" name="Science">
        <title>Whole-genome random sequencing and assembly of Haemophilus influenzae Rd.</title>
        <authorList>
            <person name="Fleischmann R.D."/>
            <person name="Adams M.D."/>
            <person name="White O."/>
            <person name="Clayton R.A."/>
            <person name="Kirkness E.F."/>
            <person name="Kerlavage A.R."/>
            <person name="Bult C.J."/>
            <person name="Tomb J.-F."/>
            <person name="Dougherty B.A."/>
            <person name="Merrick J.M."/>
            <person name="McKenney K."/>
            <person name="Sutton G.G."/>
            <person name="FitzHugh W."/>
            <person name="Fields C.A."/>
            <person name="Gocayne J.D."/>
            <person name="Scott J.D."/>
            <person name="Shirley R."/>
            <person name="Liu L.-I."/>
            <person name="Glodek A."/>
            <person name="Kelley J.M."/>
            <person name="Weidman J.F."/>
            <person name="Phillips C.A."/>
            <person name="Spriggs T."/>
            <person name="Hedblom E."/>
            <person name="Cotton M.D."/>
            <person name="Utterback T.R."/>
            <person name="Hanna M.C."/>
            <person name="Nguyen D.T."/>
            <person name="Saudek D.M."/>
            <person name="Brandon R.C."/>
            <person name="Fine L.D."/>
            <person name="Fritchman J.L."/>
            <person name="Fuhrmann J.L."/>
            <person name="Geoghagen N.S.M."/>
            <person name="Gnehm C.L."/>
            <person name="McDonald L.A."/>
            <person name="Small K.V."/>
            <person name="Fraser C.M."/>
            <person name="Smith H.O."/>
            <person name="Venter J.C."/>
        </authorList>
    </citation>
    <scope>NUCLEOTIDE SEQUENCE [LARGE SCALE GENOMIC DNA]</scope>
    <source>
        <strain>ATCC 51907 / DSM 11121 / KW20 / Rd</strain>
    </source>
</reference>
<keyword id="KW-0472">Membrane</keyword>
<keyword id="KW-1185">Reference proteome</keyword>
<keyword id="KW-0812">Transmembrane</keyword>
<keyword id="KW-1133">Transmembrane helix</keyword>
<organism>
    <name type="scientific">Haemophilus influenzae (strain ATCC 51907 / DSM 11121 / KW20 / Rd)</name>
    <dbReference type="NCBI Taxonomy" id="71421"/>
    <lineage>
        <taxon>Bacteria</taxon>
        <taxon>Pseudomonadati</taxon>
        <taxon>Pseudomonadota</taxon>
        <taxon>Gammaproteobacteria</taxon>
        <taxon>Pasteurellales</taxon>
        <taxon>Pasteurellaceae</taxon>
        <taxon>Haemophilus</taxon>
    </lineage>
</organism>
<feature type="chain" id="PRO_0000077979" description="Uncharacterized protein HI_0939">
    <location>
        <begin position="1"/>
        <end position="238"/>
    </location>
</feature>
<feature type="transmembrane region" description="Helical" evidence="1">
    <location>
        <begin position="10"/>
        <end position="33"/>
    </location>
</feature>
<gene>
    <name type="ordered locus">HI_0939</name>
</gene>